<accession>Q98Q29</accession>
<protein>
    <recommendedName>
        <fullName evidence="1">Protein NrdI</fullName>
    </recommendedName>
</protein>
<name>NRDI_MYCPU</name>
<reference key="1">
    <citation type="journal article" date="2001" name="Nucleic Acids Res.">
        <title>The complete genome sequence of the murine respiratory pathogen Mycoplasma pulmonis.</title>
        <authorList>
            <person name="Chambaud I."/>
            <person name="Heilig R."/>
            <person name="Ferris S."/>
            <person name="Barbe V."/>
            <person name="Samson D."/>
            <person name="Galisson F."/>
            <person name="Moszer I."/>
            <person name="Dybvig K."/>
            <person name="Wroblewski H."/>
            <person name="Viari A."/>
            <person name="Rocha E.P.C."/>
            <person name="Blanchard A."/>
        </authorList>
    </citation>
    <scope>NUCLEOTIDE SEQUENCE [LARGE SCALE GENOMIC DNA]</scope>
    <source>
        <strain>UAB CTIP</strain>
    </source>
</reference>
<proteinExistence type="inferred from homology"/>
<gene>
    <name evidence="1" type="primary">nrdI</name>
    <name type="ordered locus">MYPU_5400</name>
</gene>
<sequence>MHEDLIKVSSNTIKKPTGQVFVVYFSSISNNTHRFIQKLNYENLRIPVNMEESVFVDKDYVIFVPTYSGGGEFTQGAVPKQVIKFLNNEKNRSFCRGVIASGNTNFGNTFAIAGPILSKKLNVPLLYQFELLGTSEDVKNVQNILETFWKT</sequence>
<keyword id="KW-1185">Reference proteome</keyword>
<organism>
    <name type="scientific">Mycoplasmopsis pulmonis (strain UAB CTIP)</name>
    <name type="common">Mycoplasma pulmonis</name>
    <dbReference type="NCBI Taxonomy" id="272635"/>
    <lineage>
        <taxon>Bacteria</taxon>
        <taxon>Bacillati</taxon>
        <taxon>Mycoplasmatota</taxon>
        <taxon>Mycoplasmoidales</taxon>
        <taxon>Metamycoplasmataceae</taxon>
        <taxon>Mycoplasmopsis</taxon>
    </lineage>
</organism>
<dbReference type="EMBL" id="AL445565">
    <property type="protein sequence ID" value="CAC13713.1"/>
    <property type="molecule type" value="Genomic_DNA"/>
</dbReference>
<dbReference type="PIR" id="D90579">
    <property type="entry name" value="D90579"/>
</dbReference>
<dbReference type="RefSeq" id="WP_010925341.1">
    <property type="nucleotide sequence ID" value="NC_002771.1"/>
</dbReference>
<dbReference type="SMR" id="Q98Q29"/>
<dbReference type="STRING" id="272635.gene:17577142"/>
<dbReference type="KEGG" id="mpu:MYPU_5400"/>
<dbReference type="eggNOG" id="COG1780">
    <property type="taxonomic scope" value="Bacteria"/>
</dbReference>
<dbReference type="HOGENOM" id="CLU_114845_0_0_14"/>
<dbReference type="BioCyc" id="MPUL272635:G1GT6-548-MONOMER"/>
<dbReference type="Proteomes" id="UP000000528">
    <property type="component" value="Chromosome"/>
</dbReference>
<dbReference type="GO" id="GO:0010181">
    <property type="term" value="F:FMN binding"/>
    <property type="evidence" value="ECO:0007669"/>
    <property type="project" value="InterPro"/>
</dbReference>
<dbReference type="GO" id="GO:0036211">
    <property type="term" value="P:protein modification process"/>
    <property type="evidence" value="ECO:0007669"/>
    <property type="project" value="InterPro"/>
</dbReference>
<dbReference type="Gene3D" id="3.40.50.360">
    <property type="match status" value="1"/>
</dbReference>
<dbReference type="HAMAP" id="MF_00128">
    <property type="entry name" value="NrdI"/>
    <property type="match status" value="1"/>
</dbReference>
<dbReference type="InterPro" id="IPR029039">
    <property type="entry name" value="Flavoprotein-like_sf"/>
</dbReference>
<dbReference type="InterPro" id="IPR020852">
    <property type="entry name" value="RNR_Ib_NrdI_bac"/>
</dbReference>
<dbReference type="InterPro" id="IPR004465">
    <property type="entry name" value="RNR_NrdI"/>
</dbReference>
<dbReference type="NCBIfam" id="TIGR00333">
    <property type="entry name" value="nrdI"/>
    <property type="match status" value="1"/>
</dbReference>
<dbReference type="PANTHER" id="PTHR37297">
    <property type="entry name" value="PROTEIN NRDI"/>
    <property type="match status" value="1"/>
</dbReference>
<dbReference type="PANTHER" id="PTHR37297:SF1">
    <property type="entry name" value="PROTEIN NRDI"/>
    <property type="match status" value="1"/>
</dbReference>
<dbReference type="Pfam" id="PF07972">
    <property type="entry name" value="Flavodoxin_NdrI"/>
    <property type="match status" value="1"/>
</dbReference>
<dbReference type="PIRSF" id="PIRSF005087">
    <property type="entry name" value="NrdI"/>
    <property type="match status" value="1"/>
</dbReference>
<dbReference type="SUPFAM" id="SSF52218">
    <property type="entry name" value="Flavoproteins"/>
    <property type="match status" value="1"/>
</dbReference>
<evidence type="ECO:0000255" key="1">
    <source>
        <dbReference type="HAMAP-Rule" id="MF_00128"/>
    </source>
</evidence>
<comment type="function">
    <text evidence="1">Probably involved in ribonucleotide reductase function.</text>
</comment>
<comment type="similarity">
    <text evidence="1">Belongs to the NrdI family.</text>
</comment>
<feature type="chain" id="PRO_0000164324" description="Protein NrdI">
    <location>
        <begin position="1"/>
        <end position="151"/>
    </location>
</feature>